<organism>
    <name type="scientific">Rickettsia typhi (strain ATCC VR-144 / Wilmington)</name>
    <dbReference type="NCBI Taxonomy" id="257363"/>
    <lineage>
        <taxon>Bacteria</taxon>
        <taxon>Pseudomonadati</taxon>
        <taxon>Pseudomonadota</taxon>
        <taxon>Alphaproteobacteria</taxon>
        <taxon>Rickettsiales</taxon>
        <taxon>Rickettsiaceae</taxon>
        <taxon>Rickettsieae</taxon>
        <taxon>Rickettsia</taxon>
        <taxon>typhus group</taxon>
    </lineage>
</organism>
<proteinExistence type="inferred from homology"/>
<keyword id="KW-1003">Cell membrane</keyword>
<keyword id="KW-0472">Membrane</keyword>
<keyword id="KW-0520">NAD</keyword>
<keyword id="KW-0874">Quinone</keyword>
<keyword id="KW-1278">Translocase</keyword>
<keyword id="KW-0812">Transmembrane</keyword>
<keyword id="KW-1133">Transmembrane helix</keyword>
<comment type="function">
    <text evidence="1">NDH-1 shuttles electrons from NADH, via FMN and iron-sulfur (Fe-S) centers, to quinones in the respiratory chain. Couples the redox reaction to proton translocation (for every two electrons transferred, four hydrogen ions are translocated across the cytoplasmic membrane), and thus conserves the redox energy in a proton gradient (By similarity).</text>
</comment>
<comment type="catalytic activity">
    <reaction>
        <text>a quinone + NADH + 5 H(+)(in) = a quinol + NAD(+) + 4 H(+)(out)</text>
        <dbReference type="Rhea" id="RHEA:57888"/>
        <dbReference type="ChEBI" id="CHEBI:15378"/>
        <dbReference type="ChEBI" id="CHEBI:24646"/>
        <dbReference type="ChEBI" id="CHEBI:57540"/>
        <dbReference type="ChEBI" id="CHEBI:57945"/>
        <dbReference type="ChEBI" id="CHEBI:132124"/>
    </reaction>
</comment>
<comment type="subcellular location">
    <subcellularLocation>
        <location evidence="3">Cell membrane</location>
        <topology evidence="3">Multi-pass membrane protein</topology>
    </subcellularLocation>
</comment>
<comment type="similarity">
    <text evidence="3">Belongs to the complex I subunit 5 family.</text>
</comment>
<sequence>MIHQNLAIMIIILPLVSSVINGLFLNRIDKKLAKIIAISFLLLSALFSLIIFCDATLVGKIIHIKLLPWIEFRNFKVNWSIYIDQLTSIMFIVVTFVSSVVHIYSLGYMANDKGIIRFLSFLSLFTFFMLMLVSADNFLQLFCGWEGVGVCSYLLIGFWYSKESANKAAMKAFITNRVSDFAFILGIITIIIYNGSANYKDVFLSAKLLSNTKILVHFSILDIICLLLSIGCIGKSAQIGLHVWLPDAMEGPTPVSALIHAATMVTAGIFLVARCSYLFEYSPIVLQFITIIGGITCLFAASIAIMQSDIKKIIAYSTCSQLGYMFMACGVSSYNSAIFHLVTHAFFKALLFLSAGSVIHSVNEHNIFKMGNLINKMPITYGNFLIGSLALIGIYPLSGFYSKDLILEAAYSSGSFMFIFGITAAMLTAIYSMKIIILVFHGKTKLEKDVFEHAHEPTKTMNNPLILLVAGSFFSGMLGYYLLSMNKPNGYFHESLFNLHIYKLLINHTPLYIKLLPMAVGIVGIVIGICLYKDSLPYHDALTNKSNKSKKDWIPQSNYKMILFIPNILRNKYYFDEIYNYLIIKPIHCLAYLFYLGDQKIIDRFGPNGFARVINYFCALTCKIQTGYIFNYALYIVSFIVITISYFVWKSIY</sequence>
<evidence type="ECO:0000250" key="1"/>
<evidence type="ECO:0000255" key="2"/>
<evidence type="ECO:0000305" key="3"/>
<name>NUOL_RICTY</name>
<reference key="1">
    <citation type="journal article" date="2004" name="J. Bacteriol.">
        <title>Complete genome sequence of Rickettsia typhi and comparison with sequences of other Rickettsiae.</title>
        <authorList>
            <person name="McLeod M.P."/>
            <person name="Qin X."/>
            <person name="Karpathy S.E."/>
            <person name="Gioia J."/>
            <person name="Highlander S.K."/>
            <person name="Fox G.E."/>
            <person name="McNeill T.Z."/>
            <person name="Jiang H."/>
            <person name="Muzny D."/>
            <person name="Jacob L.S."/>
            <person name="Hawes A.C."/>
            <person name="Sodergren E."/>
            <person name="Gill R."/>
            <person name="Hume J."/>
            <person name="Morgan M."/>
            <person name="Fan G."/>
            <person name="Amin A.G."/>
            <person name="Gibbs R.A."/>
            <person name="Hong C."/>
            <person name="Yu X.-J."/>
            <person name="Walker D.H."/>
            <person name="Weinstock G.M."/>
        </authorList>
    </citation>
    <scope>NUCLEOTIDE SEQUENCE [LARGE SCALE GENOMIC DNA]</scope>
    <source>
        <strain>ATCC VR-144 / Wilmington</strain>
    </source>
</reference>
<gene>
    <name type="primary">nuoL</name>
    <name type="ordered locus">RT0779</name>
</gene>
<feature type="chain" id="PRO_0000287837" description="NADH-quinone oxidoreductase subunit L">
    <location>
        <begin position="1"/>
        <end position="653"/>
    </location>
</feature>
<feature type="transmembrane region" description="Helical" evidence="2">
    <location>
        <begin position="8"/>
        <end position="28"/>
    </location>
</feature>
<feature type="transmembrane region" description="Helical" evidence="2">
    <location>
        <begin position="35"/>
        <end position="55"/>
    </location>
</feature>
<feature type="transmembrane region" description="Helical" evidence="2">
    <location>
        <begin position="89"/>
        <end position="109"/>
    </location>
</feature>
<feature type="transmembrane region" description="Helical" evidence="2">
    <location>
        <begin position="115"/>
        <end position="135"/>
    </location>
</feature>
<feature type="transmembrane region" description="Helical" evidence="2">
    <location>
        <begin position="138"/>
        <end position="158"/>
    </location>
</feature>
<feature type="transmembrane region" description="Helical" evidence="2">
    <location>
        <begin position="178"/>
        <end position="198"/>
    </location>
</feature>
<feature type="transmembrane region" description="Helical" evidence="2">
    <location>
        <begin position="214"/>
        <end position="234"/>
    </location>
</feature>
<feature type="transmembrane region" description="Helical" evidence="2">
    <location>
        <begin position="253"/>
        <end position="273"/>
    </location>
</feature>
<feature type="transmembrane region" description="Helical" evidence="2">
    <location>
        <begin position="285"/>
        <end position="305"/>
    </location>
</feature>
<feature type="transmembrane region" description="Helical" evidence="2">
    <location>
        <begin position="313"/>
        <end position="333"/>
    </location>
</feature>
<feature type="transmembrane region" description="Helical" evidence="2">
    <location>
        <begin position="336"/>
        <end position="356"/>
    </location>
</feature>
<feature type="transmembrane region" description="Helical" evidence="2">
    <location>
        <begin position="377"/>
        <end position="397"/>
    </location>
</feature>
<feature type="transmembrane region" description="Helical" evidence="2">
    <location>
        <begin position="418"/>
        <end position="438"/>
    </location>
</feature>
<feature type="transmembrane region" description="Helical" evidence="2">
    <location>
        <begin position="465"/>
        <end position="485"/>
    </location>
</feature>
<feature type="transmembrane region" description="Helical" evidence="2">
    <location>
        <begin position="511"/>
        <end position="531"/>
    </location>
</feature>
<feature type="transmembrane region" description="Helical" evidence="2">
    <location>
        <begin position="577"/>
        <end position="597"/>
    </location>
</feature>
<feature type="transmembrane region" description="Helical" evidence="2">
    <location>
        <begin position="629"/>
        <end position="649"/>
    </location>
</feature>
<dbReference type="EC" id="7.1.1.-"/>
<dbReference type="EMBL" id="AE017197">
    <property type="protein sequence ID" value="AAU04235.1"/>
    <property type="molecule type" value="Genomic_DNA"/>
</dbReference>
<dbReference type="RefSeq" id="WP_011191210.1">
    <property type="nucleotide sequence ID" value="NC_006142.1"/>
</dbReference>
<dbReference type="SMR" id="Q68VV7"/>
<dbReference type="KEGG" id="rty:RT0779"/>
<dbReference type="eggNOG" id="COG1009">
    <property type="taxonomic scope" value="Bacteria"/>
</dbReference>
<dbReference type="HOGENOM" id="CLU_007100_6_0_5"/>
<dbReference type="OrthoDB" id="9811798at2"/>
<dbReference type="Proteomes" id="UP000000604">
    <property type="component" value="Chromosome"/>
</dbReference>
<dbReference type="GO" id="GO:0005886">
    <property type="term" value="C:plasma membrane"/>
    <property type="evidence" value="ECO:0007669"/>
    <property type="project" value="UniProtKB-SubCell"/>
</dbReference>
<dbReference type="GO" id="GO:0008137">
    <property type="term" value="F:NADH dehydrogenase (ubiquinone) activity"/>
    <property type="evidence" value="ECO:0007669"/>
    <property type="project" value="InterPro"/>
</dbReference>
<dbReference type="GO" id="GO:0048038">
    <property type="term" value="F:quinone binding"/>
    <property type="evidence" value="ECO:0007669"/>
    <property type="project" value="UniProtKB-KW"/>
</dbReference>
<dbReference type="GO" id="GO:0042773">
    <property type="term" value="P:ATP synthesis coupled electron transport"/>
    <property type="evidence" value="ECO:0007669"/>
    <property type="project" value="InterPro"/>
</dbReference>
<dbReference type="GO" id="GO:0015990">
    <property type="term" value="P:electron transport coupled proton transport"/>
    <property type="evidence" value="ECO:0007669"/>
    <property type="project" value="TreeGrafter"/>
</dbReference>
<dbReference type="Gene3D" id="1.20.5.2700">
    <property type="match status" value="1"/>
</dbReference>
<dbReference type="InterPro" id="IPR018393">
    <property type="entry name" value="NADHpl_OxRdtase_5_subgr"/>
</dbReference>
<dbReference type="InterPro" id="IPR001750">
    <property type="entry name" value="ND/Mrp_TM"/>
</dbReference>
<dbReference type="InterPro" id="IPR003945">
    <property type="entry name" value="NU5C-like"/>
</dbReference>
<dbReference type="InterPro" id="IPR001516">
    <property type="entry name" value="Proton_antipo_N"/>
</dbReference>
<dbReference type="NCBIfam" id="TIGR01974">
    <property type="entry name" value="NDH_I_L"/>
    <property type="match status" value="1"/>
</dbReference>
<dbReference type="NCBIfam" id="NF005141">
    <property type="entry name" value="PRK06590.1"/>
    <property type="match status" value="1"/>
</dbReference>
<dbReference type="PANTHER" id="PTHR42829">
    <property type="entry name" value="NADH-UBIQUINONE OXIDOREDUCTASE CHAIN 5"/>
    <property type="match status" value="1"/>
</dbReference>
<dbReference type="PANTHER" id="PTHR42829:SF2">
    <property type="entry name" value="NADH-UBIQUINONE OXIDOREDUCTASE CHAIN 5"/>
    <property type="match status" value="1"/>
</dbReference>
<dbReference type="Pfam" id="PF00361">
    <property type="entry name" value="Proton_antipo_M"/>
    <property type="match status" value="1"/>
</dbReference>
<dbReference type="Pfam" id="PF00662">
    <property type="entry name" value="Proton_antipo_N"/>
    <property type="match status" value="1"/>
</dbReference>
<dbReference type="PRINTS" id="PR01434">
    <property type="entry name" value="NADHDHGNASE5"/>
</dbReference>
<dbReference type="PRINTS" id="PR01435">
    <property type="entry name" value="NPOXDRDTASE5"/>
</dbReference>
<protein>
    <recommendedName>
        <fullName>NADH-quinone oxidoreductase subunit L</fullName>
        <ecNumber>7.1.1.-</ecNumber>
    </recommendedName>
    <alternativeName>
        <fullName>NADH dehydrogenase I subunit L</fullName>
    </alternativeName>
    <alternativeName>
        <fullName>NDH-1 subunit L</fullName>
    </alternativeName>
</protein>
<accession>Q68VV7</accession>